<comment type="function">
    <text>Catalyzes the oxidation of glycerol to glycerone. Also acts, more slowly, on a number of other polyols including D-sorbitol, D-arabinitol, D-mannitol, meso-erythritol, adonitol and propylene glycol.</text>
</comment>
<comment type="catalytic activity">
    <reaction>
        <text>glycerol + A = dihydroxyacetone + AH2</text>
        <dbReference type="Rhea" id="RHEA:17493"/>
        <dbReference type="ChEBI" id="CHEBI:13193"/>
        <dbReference type="ChEBI" id="CHEBI:16016"/>
        <dbReference type="ChEBI" id="CHEBI:17499"/>
        <dbReference type="ChEBI" id="CHEBI:17754"/>
        <dbReference type="EC" id="1.1.99.22"/>
    </reaction>
</comment>
<comment type="cofactor">
    <cofactor>
        <name>pyrroloquinoline quinone</name>
        <dbReference type="ChEBI" id="CHEBI:58442"/>
    </cofactor>
</comment>
<comment type="subcellular location">
    <subcellularLocation>
        <location evidence="3">Secreted</location>
    </subcellularLocation>
</comment>
<comment type="similarity">
    <text evidence="3">Belongs to the bacterial PQQ dehydrogenase family.</text>
</comment>
<comment type="sequence caution" evidence="3">
    <conflict type="frameshift">
        <sequence resource="EMBL-CDS" id="BAC02909"/>
    </conflict>
</comment>
<sequence length="740" mass="79499">MRRPYLLATAAGLALACSPLIAHAQFAPAGAGGEPSSSVPGPGNASEPTENSPKSQSYFAGPSPYAPQAPGVNAANLPDIESIDPSQVPAMAPQQSANPARGDWVAYGRDDHQTRYSPLSEITPENASKLKVAFVYHTGSYPRPGQVNKWAAETTPIKVGDGLYTCSAMNDIIKLDPATGKQIWRRNVDVKYHSIPYTAACKGVTYFTSSVVPEGQPCHNRLIEGTLDMRLIAVDAETGDFCPNFGHGGQVNLMQGLGESVPGFVSMTAPPPVINGVVVVNHEVLDGQRRWAPSGVIRGYDAESGKFVWAWDVNNSDDHSQPTGNRHYSRGTPNSWATMTGDNEEGLVYVPTGNSAADYYSALRSDAENKVSSAVVAIDVKTGSPRWVFQTAHKDVWDYDIGSQATLMDMPGPDGQTVPALIMPTKRGQTFVLDRRTGKPILPVEERPAPSPGVIPGDPRSPTQPWSVGMPALRVPDLKETDMWGMSPIDQLFCRIKFRRANYVGEFTPPSVDKPWIEYPGYNGGSDWGSMSYDPQSGILIANWNITPMYDQLVTRKKADSLGLMPIDDPNFKPGGGGAEGNGAMDGTPYGIVVTPFWDQYTGMMCNRPPYGMITAIDMKHGQKVLWQHPLGTARANGPWGLPTGLPWEIGTPNNGGSVVTGGGLIFIGAATDNQIRAIDEHTGKVVWSAVLPGGGQANPMTYEANGHQYVAIMAGGHHFMMTPVSDQLVVYALPDAIKQ</sequence>
<evidence type="ECO:0000256" key="1">
    <source>
        <dbReference type="SAM" id="MobiDB-lite"/>
    </source>
</evidence>
<evidence type="ECO:0000269" key="2">
    <source>
    </source>
</evidence>
<evidence type="ECO:0000305" key="3"/>
<name>SLDA_GLUTH</name>
<reference key="1">
    <citation type="journal article" date="2003" name="Biochim. Biophys. Acta">
        <title>Membrane-bound D-sorbitol dehydrogenase of Gluconobacter suboxydans IFO 3255 -- enzymatic and genetic characterization.</title>
        <authorList>
            <person name="Hoshino T."/>
            <person name="Sugisawa T."/>
            <person name="Shinjoh M."/>
            <person name="Tomiyama N."/>
            <person name="Miyazaki T."/>
        </authorList>
    </citation>
    <scope>NUCLEOTIDE SEQUENCE [GENOMIC DNA]</scope>
    <source>
        <strain>NBRC 3255 / JCM 20465 / IAM 12306 / LMG 1487</strain>
    </source>
</reference>
<reference key="2">
    <citation type="journal article" date="2003" name="Appl. Environ. Microbiol.">
        <title>5-keto-D-gluconate production is catalyzed by a quinoprotein glycerol dehydrogenase, major polyol dehydrogenase, in gluconobacter species.</title>
        <authorList>
            <person name="Matsushita K."/>
            <person name="Fujii Y."/>
            <person name="Ano Y."/>
            <person name="Toyama H."/>
            <person name="Shinjoh M."/>
            <person name="Tomiyama N."/>
            <person name="Miyazaki T."/>
            <person name="Sugisawa T."/>
            <person name="Hoshino T."/>
            <person name="Adachi O."/>
        </authorList>
    </citation>
    <scope>PROTEIN SEQUENCE OF 30-39</scope>
    <scope>CHARACTERIZATION</scope>
    <source>
        <strain>NBRC 3255 / JCM 20465 / IAM 12306 / LMG 1487</strain>
    </source>
</reference>
<gene>
    <name type="primary">sldA</name>
</gene>
<keyword id="KW-0903">Direct protein sequencing</keyword>
<keyword id="KW-0560">Oxidoreductase</keyword>
<keyword id="KW-0964">Secreted</keyword>
<keyword id="KW-0732">Signal</keyword>
<proteinExistence type="evidence at protein level"/>
<feature type="signal peptide" evidence="2">
    <location>
        <begin position="1"/>
        <end position="29"/>
    </location>
</feature>
<feature type="chain" id="PRO_0000045858" description="Glycerol dehydrogenase large subunit">
    <location>
        <begin position="30"/>
        <end position="740"/>
    </location>
</feature>
<feature type="region of interest" description="Disordered" evidence="1">
    <location>
        <begin position="28"/>
        <end position="105"/>
    </location>
</feature>
<feature type="region of interest" description="Disordered" evidence="1">
    <location>
        <begin position="442"/>
        <end position="468"/>
    </location>
</feature>
<feature type="compositionally biased region" description="Low complexity" evidence="1">
    <location>
        <begin position="34"/>
        <end position="43"/>
    </location>
</feature>
<feature type="compositionally biased region" description="Polar residues" evidence="1">
    <location>
        <begin position="46"/>
        <end position="58"/>
    </location>
</feature>
<organism>
    <name type="scientific">Gluconobacter thailandicus</name>
    <dbReference type="NCBI Taxonomy" id="257438"/>
    <lineage>
        <taxon>Bacteria</taxon>
        <taxon>Pseudomonadati</taxon>
        <taxon>Pseudomonadota</taxon>
        <taxon>Alphaproteobacteria</taxon>
        <taxon>Acetobacterales</taxon>
        <taxon>Acetobacteraceae</taxon>
        <taxon>Gluconobacter</taxon>
    </lineage>
</organism>
<accession>Q8KIL1</accession>
<dbReference type="EC" id="1.1.99.22"/>
<dbReference type="EMBL" id="AB065091">
    <property type="protein sequence ID" value="BAC02909.1"/>
    <property type="status" value="ALT_FRAME"/>
    <property type="molecule type" value="Genomic_DNA"/>
</dbReference>
<dbReference type="SMR" id="Q8KIL1"/>
<dbReference type="BioCyc" id="MetaCyc:MONOMER-13708"/>
<dbReference type="GO" id="GO:0005576">
    <property type="term" value="C:extracellular region"/>
    <property type="evidence" value="ECO:0007669"/>
    <property type="project" value="UniProtKB-SubCell"/>
</dbReference>
<dbReference type="GO" id="GO:0016020">
    <property type="term" value="C:membrane"/>
    <property type="evidence" value="ECO:0007669"/>
    <property type="project" value="InterPro"/>
</dbReference>
<dbReference type="GO" id="GO:0047955">
    <property type="term" value="F:glycerol dehydrogenase (acceptor) activity"/>
    <property type="evidence" value="ECO:0007669"/>
    <property type="project" value="UniProtKB-EC"/>
</dbReference>
<dbReference type="GO" id="GO:0048038">
    <property type="term" value="F:quinone binding"/>
    <property type="evidence" value="ECO:0007669"/>
    <property type="project" value="InterPro"/>
</dbReference>
<dbReference type="GO" id="GO:0008876">
    <property type="term" value="F:quinoprotein glucose dehydrogenase activity"/>
    <property type="evidence" value="ECO:0007669"/>
    <property type="project" value="TreeGrafter"/>
</dbReference>
<dbReference type="CDD" id="cd10280">
    <property type="entry name" value="PQQ_mGDH"/>
    <property type="match status" value="1"/>
</dbReference>
<dbReference type="Gene3D" id="2.140.10.10">
    <property type="entry name" value="Quinoprotein alcohol dehydrogenase-like superfamily"/>
    <property type="match status" value="2"/>
</dbReference>
<dbReference type="InterPro" id="IPR018391">
    <property type="entry name" value="PQQ_b-propeller_rpt"/>
</dbReference>
<dbReference type="InterPro" id="IPR017511">
    <property type="entry name" value="PQQ_mDH"/>
</dbReference>
<dbReference type="InterPro" id="IPR002372">
    <property type="entry name" value="PQQ_rpt_dom"/>
</dbReference>
<dbReference type="InterPro" id="IPR011047">
    <property type="entry name" value="Quinoprotein_ADH-like_sf"/>
</dbReference>
<dbReference type="PANTHER" id="PTHR32303">
    <property type="entry name" value="QUINOPROTEIN ALCOHOL DEHYDROGENASE (CYTOCHROME C)"/>
    <property type="match status" value="1"/>
</dbReference>
<dbReference type="PANTHER" id="PTHR32303:SF4">
    <property type="entry name" value="QUINOPROTEIN GLUCOSE DEHYDROGENASE"/>
    <property type="match status" value="1"/>
</dbReference>
<dbReference type="Pfam" id="PF01011">
    <property type="entry name" value="PQQ"/>
    <property type="match status" value="1"/>
</dbReference>
<dbReference type="SMART" id="SM00564">
    <property type="entry name" value="PQQ"/>
    <property type="match status" value="4"/>
</dbReference>
<dbReference type="SUPFAM" id="SSF50998">
    <property type="entry name" value="Quinoprotein alcohol dehydrogenase-like"/>
    <property type="match status" value="1"/>
</dbReference>
<protein>
    <recommendedName>
        <fullName>Glycerol dehydrogenase large subunit</fullName>
        <ecNumber>1.1.99.22</ecNumber>
    </recommendedName>
    <alternativeName>
        <fullName>D-arabitol dehydrogenase large subunit</fullName>
        <shortName>ARDH</shortName>
    </alternativeName>
    <alternativeName>
        <fullName>D-sorbitol dehydrogenase subunit SldA</fullName>
        <shortName>SLDH</shortName>
    </alternativeName>
    <alternativeName>
        <fullName>Gluconate/polyol dehydrogenase large subunit</fullName>
    </alternativeName>
</protein>